<feature type="chain" id="PRO_0000082185" description="ATP synthase F(0) complex subunit a">
    <location>
        <begin position="1"/>
        <end position="226"/>
    </location>
</feature>
<feature type="transmembrane region" description="Helical" evidence="2">
    <location>
        <begin position="13"/>
        <end position="33"/>
    </location>
</feature>
<feature type="transmembrane region" description="Helical" evidence="2">
    <location>
        <begin position="69"/>
        <end position="89"/>
    </location>
</feature>
<feature type="transmembrane region" description="Helical" evidence="2">
    <location>
        <begin position="97"/>
        <end position="117"/>
    </location>
</feature>
<feature type="transmembrane region" description="Helical" evidence="2">
    <location>
        <begin position="138"/>
        <end position="158"/>
    </location>
</feature>
<feature type="transmembrane region" description="Helical" evidence="2">
    <location>
        <begin position="179"/>
        <end position="199"/>
    </location>
</feature>
<feature type="transmembrane region" description="Helical" evidence="2">
    <location>
        <begin position="201"/>
        <end position="221"/>
    </location>
</feature>
<evidence type="ECO:0000250" key="1">
    <source>
        <dbReference type="UniProtKB" id="P00846"/>
    </source>
</evidence>
<evidence type="ECO:0000255" key="2"/>
<evidence type="ECO:0000305" key="3"/>
<protein>
    <recommendedName>
        <fullName evidence="1">ATP synthase F(0) complex subunit a</fullName>
    </recommendedName>
    <alternativeName>
        <fullName>F-ATPase protein 6</fullName>
    </alternativeName>
    <alternativeName>
        <fullName evidence="1">Proton-conducting channel, ATP synthase F(0) complex subunit a</fullName>
    </alternativeName>
</protein>
<comment type="function">
    <text evidence="1">Subunit a, of the mitochondrial membrane ATP synthase complex (F(1)F(0) ATP synthase or Complex V) that produces ATP from ADP in the presence of a proton gradient across the membrane which is generated by electron transport complexes of the respiratory chain. ATP synthase complex consist of a soluble F(1) head domain - the catalytic core - and a membrane F(1) domain - the membrane proton channel. These two domains are linked by a central stalk rotating inside the F(1) region and a stationary peripheral stalk. During catalysis, ATP synthesis in the catalytic domain of F(1) is coupled via a rotary mechanism of the central stalk subunits to proton translocation. With the subunit c (ATP5MC1), forms the proton-conducting channel in the F(0) domain, that contains two crucial half-channels (inlet and outlet) that facilitate proton movement from the mitochondrial intermembrane space (IMS) into the matrix. Protons are taken up via the inlet half-channel and released through the outlet half-channel, following a Grotthuss mechanism.</text>
</comment>
<comment type="catalytic activity">
    <reaction evidence="1">
        <text>H(+)(in) = H(+)(out)</text>
        <dbReference type="Rhea" id="RHEA:34979"/>
        <dbReference type="ChEBI" id="CHEBI:15378"/>
    </reaction>
</comment>
<comment type="subunit">
    <text evidence="1">Component of the ATP synthase complex composed at least of ATP5F1A/subunit alpha, ATP5F1B/subunit beta, ATP5MC1/subunit c (homooctomer), MT-ATP6/subunit a, MT-ATP8/subunit 8, ATP5ME/subunit e, ATP5MF/subunit f, ATP5MG/subunit g, ATP5MK/subunit k, ATP5MJ/subunit j, ATP5F1C/subunit gamma, ATP5F1D/subunit delta, ATP5F1E/subunit epsilon, ATP5PF/subunit F6, ATP5PB/subunit b, ATP5PD/subunit d, ATP5PO/subunit OSCP. ATP synthase complex consists of a soluble F(1) head domain (subunits alpha(3) and beta(3)) - the catalytic core - and a membrane F(0) domain - the membrane proton channel (subunits c, a, 8, e, f, g, k and j). These two domains are linked by a central stalk (subunits gamma, delta, and epsilon) rotating inside the F1 region and a stationary peripheral stalk (subunits F6, b, d, and OSCP). Interacts with DNAJC30; interaction is direct.</text>
</comment>
<comment type="subcellular location">
    <subcellularLocation>
        <location>Mitochondrion inner membrane</location>
        <topology>Multi-pass membrane protein</topology>
    </subcellularLocation>
</comment>
<comment type="similarity">
    <text evidence="3">Belongs to the ATPase A chain family.</text>
</comment>
<accession>P00849</accession>
<reference key="1">
    <citation type="journal article" date="1985" name="J. Biol. Chem.">
        <title>The complete nucleotide sequence of the Xenopus laevis mitochondrial genome.</title>
        <authorList>
            <person name="Roe B.A."/>
            <person name="Ma D.-P."/>
            <person name="Wilson R.K."/>
            <person name="Wong J.F.-H."/>
        </authorList>
    </citation>
    <scope>NUCLEOTIDE SEQUENCE [GENOMIC DNA]</scope>
</reference>
<dbReference type="EMBL" id="M10217">
    <property type="protein sequence ID" value="AAA66463.1"/>
    <property type="molecule type" value="Genomic_DNA"/>
</dbReference>
<dbReference type="PIR" id="A01052">
    <property type="entry name" value="PWXL6"/>
</dbReference>
<dbReference type="RefSeq" id="NP_008139.1">
    <property type="nucleotide sequence ID" value="NC_001573.1"/>
</dbReference>
<dbReference type="SMR" id="P00849"/>
<dbReference type="GeneID" id="2642083"/>
<dbReference type="KEGG" id="xla:2642083"/>
<dbReference type="CTD" id="4508"/>
<dbReference type="OrthoDB" id="5976622at2759"/>
<dbReference type="Proteomes" id="UP000186698">
    <property type="component" value="Mitochondrion MT"/>
</dbReference>
<dbReference type="Bgee" id="2642083">
    <property type="expression patterns" value="Expressed in egg cell and 19 other cell types or tissues"/>
</dbReference>
<dbReference type="GO" id="GO:0005743">
    <property type="term" value="C:mitochondrial inner membrane"/>
    <property type="evidence" value="ECO:0007669"/>
    <property type="project" value="UniProtKB-SubCell"/>
</dbReference>
<dbReference type="GO" id="GO:0045259">
    <property type="term" value="C:proton-transporting ATP synthase complex"/>
    <property type="evidence" value="ECO:0000250"/>
    <property type="project" value="UniProtKB"/>
</dbReference>
<dbReference type="GO" id="GO:0015252">
    <property type="term" value="F:proton channel activity"/>
    <property type="evidence" value="ECO:0000250"/>
    <property type="project" value="UniProtKB"/>
</dbReference>
<dbReference type="GO" id="GO:0046933">
    <property type="term" value="F:proton-transporting ATP synthase activity, rotational mechanism"/>
    <property type="evidence" value="ECO:0007669"/>
    <property type="project" value="TreeGrafter"/>
</dbReference>
<dbReference type="GO" id="GO:0015986">
    <property type="term" value="P:proton motive force-driven ATP synthesis"/>
    <property type="evidence" value="ECO:0000250"/>
    <property type="project" value="UniProtKB"/>
</dbReference>
<dbReference type="GO" id="GO:1902600">
    <property type="term" value="P:proton transmembrane transport"/>
    <property type="evidence" value="ECO:0000250"/>
    <property type="project" value="UniProtKB"/>
</dbReference>
<dbReference type="CDD" id="cd00310">
    <property type="entry name" value="ATP-synt_Fo_a_6"/>
    <property type="match status" value="1"/>
</dbReference>
<dbReference type="FunFam" id="1.20.120.220:FF:000004">
    <property type="entry name" value="ATP synthase subunit a"/>
    <property type="match status" value="1"/>
</dbReference>
<dbReference type="Gene3D" id="1.20.120.220">
    <property type="entry name" value="ATP synthase, F0 complex, subunit A"/>
    <property type="match status" value="1"/>
</dbReference>
<dbReference type="InterPro" id="IPR000568">
    <property type="entry name" value="ATP_synth_F0_asu"/>
</dbReference>
<dbReference type="InterPro" id="IPR023011">
    <property type="entry name" value="ATP_synth_F0_asu_AS"/>
</dbReference>
<dbReference type="InterPro" id="IPR045083">
    <property type="entry name" value="ATP_synth_F0_asu_bact/mt"/>
</dbReference>
<dbReference type="InterPro" id="IPR035908">
    <property type="entry name" value="F0_ATP_A_sf"/>
</dbReference>
<dbReference type="NCBIfam" id="TIGR01131">
    <property type="entry name" value="ATP_synt_6_or_A"/>
    <property type="match status" value="1"/>
</dbReference>
<dbReference type="PANTHER" id="PTHR11410">
    <property type="entry name" value="ATP SYNTHASE SUBUNIT A"/>
    <property type="match status" value="1"/>
</dbReference>
<dbReference type="PANTHER" id="PTHR11410:SF0">
    <property type="entry name" value="ATP SYNTHASE SUBUNIT A"/>
    <property type="match status" value="1"/>
</dbReference>
<dbReference type="Pfam" id="PF00119">
    <property type="entry name" value="ATP-synt_A"/>
    <property type="match status" value="1"/>
</dbReference>
<dbReference type="PRINTS" id="PR00123">
    <property type="entry name" value="ATPASEA"/>
</dbReference>
<dbReference type="SUPFAM" id="SSF81336">
    <property type="entry name" value="F1F0 ATP synthase subunit A"/>
    <property type="match status" value="1"/>
</dbReference>
<dbReference type="PROSITE" id="PS00449">
    <property type="entry name" value="ATPASE_A"/>
    <property type="match status" value="1"/>
</dbReference>
<name>ATP6_XENLA</name>
<organism>
    <name type="scientific">Xenopus laevis</name>
    <name type="common">African clawed frog</name>
    <dbReference type="NCBI Taxonomy" id="8355"/>
    <lineage>
        <taxon>Eukaryota</taxon>
        <taxon>Metazoa</taxon>
        <taxon>Chordata</taxon>
        <taxon>Craniata</taxon>
        <taxon>Vertebrata</taxon>
        <taxon>Euteleostomi</taxon>
        <taxon>Amphibia</taxon>
        <taxon>Batrachia</taxon>
        <taxon>Anura</taxon>
        <taxon>Pipoidea</taxon>
        <taxon>Pipidae</taxon>
        <taxon>Xenopodinae</taxon>
        <taxon>Xenopus</taxon>
        <taxon>Xenopus</taxon>
    </lineage>
</organism>
<keyword id="KW-0066">ATP synthesis</keyword>
<keyword id="KW-0138">CF(0)</keyword>
<keyword id="KW-0375">Hydrogen ion transport</keyword>
<keyword id="KW-0406">Ion transport</keyword>
<keyword id="KW-0472">Membrane</keyword>
<keyword id="KW-0496">Mitochondrion</keyword>
<keyword id="KW-0999">Mitochondrion inner membrane</keyword>
<keyword id="KW-1185">Reference proteome</keyword>
<keyword id="KW-0812">Transmembrane</keyword>
<keyword id="KW-1133">Transmembrane helix</keyword>
<keyword id="KW-0813">Transport</keyword>
<sequence>MNLSFFDQFMSPVILGIPLIAIAMLDPFTLISWPIQSNGFNNRLITLQSWFLHNFTTIFYQLTSPGHKWALLLTSLMLLLMSLNLLGLLPYTFTPTTQLSLNMGLAVPLWLATVIMASKPTNYALGHLLPEGTPTPLIPVLIIIETISLFIRPLALGVRLTANLTAGHLLIQLIATAAFVLLSIMPTVAILTSIVLFLLTLLEIAVAMIQAYVFVLLLSLYLQENV</sequence>
<geneLocation type="mitochondrion"/>
<gene>
    <name evidence="1" type="primary">mt-atp6</name>
    <name type="synonym">atp6</name>
    <name type="synonym">atpase6</name>
    <name type="synonym">mtatp6</name>
</gene>
<proteinExistence type="inferred from homology"/>